<dbReference type="EC" id="3.1.-.-" evidence="1"/>
<dbReference type="EMBL" id="AE015929">
    <property type="protein sequence ID" value="AAO04312.1"/>
    <property type="molecule type" value="Genomic_DNA"/>
</dbReference>
<dbReference type="RefSeq" id="NP_764270.1">
    <property type="nucleotide sequence ID" value="NC_004461.1"/>
</dbReference>
<dbReference type="RefSeq" id="WP_002439146.1">
    <property type="nucleotide sequence ID" value="NZ_WBME01000019.1"/>
</dbReference>
<dbReference type="SMR" id="Q8CT54"/>
<dbReference type="KEGG" id="sep:SE_0715"/>
<dbReference type="PATRIC" id="fig|176280.10.peg.689"/>
<dbReference type="eggNOG" id="COG1514">
    <property type="taxonomic scope" value="Bacteria"/>
</dbReference>
<dbReference type="HOGENOM" id="CLU_132020_0_0_9"/>
<dbReference type="OrthoDB" id="1524661at2"/>
<dbReference type="Proteomes" id="UP000001411">
    <property type="component" value="Chromosome"/>
</dbReference>
<dbReference type="GO" id="GO:0016788">
    <property type="term" value="F:hydrolase activity, acting on ester bonds"/>
    <property type="evidence" value="ECO:0007669"/>
    <property type="project" value="UniProtKB-UniRule"/>
</dbReference>
<dbReference type="Gene3D" id="3.90.1140.10">
    <property type="entry name" value="Cyclic phosphodiesterase"/>
    <property type="match status" value="1"/>
</dbReference>
<dbReference type="HAMAP" id="MF_01444">
    <property type="entry name" value="2H_phosphoesterase_YjcG"/>
    <property type="match status" value="1"/>
</dbReference>
<dbReference type="InterPro" id="IPR050580">
    <property type="entry name" value="2H_phosphoesterase_YjcG-like"/>
</dbReference>
<dbReference type="InterPro" id="IPR009097">
    <property type="entry name" value="Cyclic_Pdiesterase"/>
</dbReference>
<dbReference type="InterPro" id="IPR022932">
    <property type="entry name" value="YjcG"/>
</dbReference>
<dbReference type="NCBIfam" id="NF010223">
    <property type="entry name" value="PRK13679.1"/>
    <property type="match status" value="1"/>
</dbReference>
<dbReference type="PANTHER" id="PTHR40037:SF1">
    <property type="entry name" value="PHOSPHOESTERASE SAOUHSC_00951-RELATED"/>
    <property type="match status" value="1"/>
</dbReference>
<dbReference type="PANTHER" id="PTHR40037">
    <property type="entry name" value="PHOSPHOESTERASE YJCG-RELATED"/>
    <property type="match status" value="1"/>
</dbReference>
<dbReference type="Pfam" id="PF13563">
    <property type="entry name" value="2_5_RNA_ligase2"/>
    <property type="match status" value="1"/>
</dbReference>
<dbReference type="SUPFAM" id="SSF55144">
    <property type="entry name" value="LigT-like"/>
    <property type="match status" value="1"/>
</dbReference>
<proteinExistence type="inferred from homology"/>
<sequence length="169" mass="19553">MILGLALVPSKSFQDEVNAYRKRYDNHYAQIMPHITIKPQFEIDDHDFNLIKNEVKNRISSIKPVEVHATKASNFAPVSNVIYFKVAKTESLEQLFNQFNTEDFYGIAEHPFVPHFTIAQGLTSQEFEDIYGQVKLAGVDHREIIEELSLLQYSEEEDKWTIIETFTLG</sequence>
<organism>
    <name type="scientific">Staphylococcus epidermidis (strain ATCC 12228 / FDA PCI 1200)</name>
    <dbReference type="NCBI Taxonomy" id="176280"/>
    <lineage>
        <taxon>Bacteria</taxon>
        <taxon>Bacillati</taxon>
        <taxon>Bacillota</taxon>
        <taxon>Bacilli</taxon>
        <taxon>Bacillales</taxon>
        <taxon>Staphylococcaceae</taxon>
        <taxon>Staphylococcus</taxon>
    </lineage>
</organism>
<feature type="chain" id="PRO_0000299346" description="Putative phosphoesterase SE_0715">
    <location>
        <begin position="1"/>
        <end position="169"/>
    </location>
</feature>
<feature type="short sequence motif" description="HXTX 1" evidence="1">
    <location>
        <begin position="34"/>
        <end position="37"/>
    </location>
</feature>
<feature type="short sequence motif" description="HXTX 2" evidence="1">
    <location>
        <begin position="115"/>
        <end position="118"/>
    </location>
</feature>
<feature type="active site" description="Proton donor" evidence="1">
    <location>
        <position position="34"/>
    </location>
</feature>
<feature type="active site" description="Proton acceptor" evidence="1">
    <location>
        <position position="115"/>
    </location>
</feature>
<comment type="similarity">
    <text evidence="1">Belongs to the 2H phosphoesterase superfamily. YjcG family.</text>
</comment>
<reference key="1">
    <citation type="journal article" date="2003" name="Mol. Microbiol.">
        <title>Genome-based analysis of virulence genes in a non-biofilm-forming Staphylococcus epidermidis strain (ATCC 12228).</title>
        <authorList>
            <person name="Zhang Y.-Q."/>
            <person name="Ren S.-X."/>
            <person name="Li H.-L."/>
            <person name="Wang Y.-X."/>
            <person name="Fu G."/>
            <person name="Yang J."/>
            <person name="Qin Z.-Q."/>
            <person name="Miao Y.-G."/>
            <person name="Wang W.-Y."/>
            <person name="Chen R.-S."/>
            <person name="Shen Y."/>
            <person name="Chen Z."/>
            <person name="Yuan Z.-H."/>
            <person name="Zhao G.-P."/>
            <person name="Qu D."/>
            <person name="Danchin A."/>
            <person name="Wen Y.-M."/>
        </authorList>
    </citation>
    <scope>NUCLEOTIDE SEQUENCE [LARGE SCALE GENOMIC DNA]</scope>
    <source>
        <strain>ATCC 12228 / FDA PCI 1200</strain>
    </source>
</reference>
<gene>
    <name type="ordered locus">SE_0715</name>
</gene>
<protein>
    <recommendedName>
        <fullName evidence="1">Putative phosphoesterase SE_0715</fullName>
        <ecNumber evidence="1">3.1.-.-</ecNumber>
    </recommendedName>
</protein>
<name>Y715_STAES</name>
<evidence type="ECO:0000255" key="1">
    <source>
        <dbReference type="HAMAP-Rule" id="MF_01444"/>
    </source>
</evidence>
<accession>Q8CT54</accession>
<keyword id="KW-0378">Hydrolase</keyword>